<dbReference type="EC" id="4.3.2.10" evidence="1"/>
<dbReference type="EMBL" id="CP000866">
    <property type="protein sequence ID" value="ABX13448.1"/>
    <property type="molecule type" value="Genomic_DNA"/>
</dbReference>
<dbReference type="RefSeq" id="WP_012215935.1">
    <property type="nucleotide sequence ID" value="NC_010085.1"/>
</dbReference>
<dbReference type="SMR" id="A9A5X0"/>
<dbReference type="FunCoup" id="A9A5X0">
    <property type="interactions" value="173"/>
</dbReference>
<dbReference type="STRING" id="436308.Nmar_1552"/>
<dbReference type="EnsemblBacteria" id="ABX13448">
    <property type="protein sequence ID" value="ABX13448"/>
    <property type="gene ID" value="Nmar_1552"/>
</dbReference>
<dbReference type="GeneID" id="5773427"/>
<dbReference type="KEGG" id="nmr:Nmar_1552"/>
<dbReference type="eggNOG" id="arCOG00617">
    <property type="taxonomic scope" value="Archaea"/>
</dbReference>
<dbReference type="HOGENOM" id="CLU_048577_4_0_2"/>
<dbReference type="InParanoid" id="A9A5X0"/>
<dbReference type="OrthoDB" id="6261at2157"/>
<dbReference type="PhylomeDB" id="A9A5X0"/>
<dbReference type="UniPathway" id="UPA00031">
    <property type="reaction ID" value="UER00010"/>
</dbReference>
<dbReference type="Proteomes" id="UP000000792">
    <property type="component" value="Chromosome"/>
</dbReference>
<dbReference type="GO" id="GO:0005737">
    <property type="term" value="C:cytoplasm"/>
    <property type="evidence" value="ECO:0007669"/>
    <property type="project" value="UniProtKB-SubCell"/>
</dbReference>
<dbReference type="GO" id="GO:0000107">
    <property type="term" value="F:imidazoleglycerol-phosphate synthase activity"/>
    <property type="evidence" value="ECO:0000318"/>
    <property type="project" value="GO_Central"/>
</dbReference>
<dbReference type="GO" id="GO:0016829">
    <property type="term" value="F:lyase activity"/>
    <property type="evidence" value="ECO:0007669"/>
    <property type="project" value="UniProtKB-KW"/>
</dbReference>
<dbReference type="GO" id="GO:0000105">
    <property type="term" value="P:L-histidine biosynthetic process"/>
    <property type="evidence" value="ECO:0007669"/>
    <property type="project" value="UniProtKB-UniRule"/>
</dbReference>
<dbReference type="CDD" id="cd04731">
    <property type="entry name" value="HisF"/>
    <property type="match status" value="1"/>
</dbReference>
<dbReference type="FunFam" id="3.20.20.70:FF:000006">
    <property type="entry name" value="Imidazole glycerol phosphate synthase subunit HisF"/>
    <property type="match status" value="1"/>
</dbReference>
<dbReference type="Gene3D" id="3.20.20.70">
    <property type="entry name" value="Aldolase class I"/>
    <property type="match status" value="1"/>
</dbReference>
<dbReference type="HAMAP" id="MF_01013">
    <property type="entry name" value="HisF"/>
    <property type="match status" value="1"/>
</dbReference>
<dbReference type="InterPro" id="IPR013785">
    <property type="entry name" value="Aldolase_TIM"/>
</dbReference>
<dbReference type="InterPro" id="IPR006062">
    <property type="entry name" value="His_biosynth"/>
</dbReference>
<dbReference type="InterPro" id="IPR004651">
    <property type="entry name" value="HisF"/>
</dbReference>
<dbReference type="InterPro" id="IPR050064">
    <property type="entry name" value="IGPS_HisA/HisF"/>
</dbReference>
<dbReference type="InterPro" id="IPR011060">
    <property type="entry name" value="RibuloseP-bd_barrel"/>
</dbReference>
<dbReference type="NCBIfam" id="TIGR00735">
    <property type="entry name" value="hisF"/>
    <property type="match status" value="1"/>
</dbReference>
<dbReference type="PANTHER" id="PTHR21235:SF2">
    <property type="entry name" value="IMIDAZOLE GLYCEROL PHOSPHATE SYNTHASE HISHF"/>
    <property type="match status" value="1"/>
</dbReference>
<dbReference type="PANTHER" id="PTHR21235">
    <property type="entry name" value="IMIDAZOLE GLYCEROL PHOSPHATE SYNTHASE SUBUNIT HISF/H IGP SYNTHASE SUBUNIT HISF/H"/>
    <property type="match status" value="1"/>
</dbReference>
<dbReference type="Pfam" id="PF00977">
    <property type="entry name" value="His_biosynth"/>
    <property type="match status" value="1"/>
</dbReference>
<dbReference type="SUPFAM" id="SSF51366">
    <property type="entry name" value="Ribulose-phoshate binding barrel"/>
    <property type="match status" value="1"/>
</dbReference>
<organism>
    <name type="scientific">Nitrosopumilus maritimus (strain SCM1)</name>
    <dbReference type="NCBI Taxonomy" id="436308"/>
    <lineage>
        <taxon>Archaea</taxon>
        <taxon>Nitrososphaerota</taxon>
        <taxon>Nitrososphaeria</taxon>
        <taxon>Nitrosopumilales</taxon>
        <taxon>Nitrosopumilaceae</taxon>
        <taxon>Nitrosopumilus</taxon>
    </lineage>
</organism>
<evidence type="ECO:0000255" key="1">
    <source>
        <dbReference type="HAMAP-Rule" id="MF_01013"/>
    </source>
</evidence>
<gene>
    <name evidence="1" type="primary">hisF</name>
    <name type="ordered locus">Nmar_1552</name>
</gene>
<feature type="chain" id="PRO_1000190607" description="Imidazole glycerol phosphate synthase subunit HisF">
    <location>
        <begin position="1"/>
        <end position="266"/>
    </location>
</feature>
<feature type="active site" evidence="1">
    <location>
        <position position="11"/>
    </location>
</feature>
<feature type="active site" evidence="1">
    <location>
        <position position="130"/>
    </location>
</feature>
<reference key="1">
    <citation type="journal article" date="2010" name="Proc. Natl. Acad. Sci. U.S.A.">
        <title>Nitrosopumilus maritimus genome reveals unique mechanisms for nitrification and autotrophy in globally distributed marine crenarchaea.</title>
        <authorList>
            <person name="Walker C.B."/>
            <person name="de la Torre J.R."/>
            <person name="Klotz M.G."/>
            <person name="Urakawa H."/>
            <person name="Pinel N."/>
            <person name="Arp D.J."/>
            <person name="Brochier-Armanet C."/>
            <person name="Chain P.S."/>
            <person name="Chan P.P."/>
            <person name="Gollabgir A."/>
            <person name="Hemp J."/>
            <person name="Hugler M."/>
            <person name="Karr E.A."/>
            <person name="Konneke M."/>
            <person name="Shin M."/>
            <person name="Lawton T.J."/>
            <person name="Lowe T."/>
            <person name="Martens-Habbena W."/>
            <person name="Sayavedra-Soto L.A."/>
            <person name="Lang D."/>
            <person name="Sievert S.M."/>
            <person name="Rosenzweig A.C."/>
            <person name="Manning G."/>
            <person name="Stahl D.A."/>
        </authorList>
    </citation>
    <scope>NUCLEOTIDE SEQUENCE [LARGE SCALE GENOMIC DNA]</scope>
    <source>
        <strain>SCM1</strain>
    </source>
</reference>
<name>HIS6_NITMS</name>
<comment type="function">
    <text evidence="1">IGPS catalyzes the conversion of PRFAR and glutamine to IGP, AICAR and glutamate. The HisF subunit catalyzes the cyclization activity that produces IGP and AICAR from PRFAR using the ammonia provided by the HisH subunit.</text>
</comment>
<comment type="catalytic activity">
    <reaction evidence="1">
        <text>5-[(5-phospho-1-deoxy-D-ribulos-1-ylimino)methylamino]-1-(5-phospho-beta-D-ribosyl)imidazole-4-carboxamide + L-glutamine = D-erythro-1-(imidazol-4-yl)glycerol 3-phosphate + 5-amino-1-(5-phospho-beta-D-ribosyl)imidazole-4-carboxamide + L-glutamate + H(+)</text>
        <dbReference type="Rhea" id="RHEA:24793"/>
        <dbReference type="ChEBI" id="CHEBI:15378"/>
        <dbReference type="ChEBI" id="CHEBI:29985"/>
        <dbReference type="ChEBI" id="CHEBI:58278"/>
        <dbReference type="ChEBI" id="CHEBI:58359"/>
        <dbReference type="ChEBI" id="CHEBI:58475"/>
        <dbReference type="ChEBI" id="CHEBI:58525"/>
        <dbReference type="EC" id="4.3.2.10"/>
    </reaction>
</comment>
<comment type="pathway">
    <text evidence="1">Amino-acid biosynthesis; L-histidine biosynthesis; L-histidine from 5-phospho-alpha-D-ribose 1-diphosphate: step 5/9.</text>
</comment>
<comment type="subunit">
    <text evidence="1">Heterodimer of HisH and HisF.</text>
</comment>
<comment type="subcellular location">
    <subcellularLocation>
        <location evidence="1">Cytoplasm</location>
    </subcellularLocation>
</comment>
<comment type="similarity">
    <text evidence="1">Belongs to the HisA/HisF family.</text>
</comment>
<proteinExistence type="inferred from homology"/>
<protein>
    <recommendedName>
        <fullName evidence="1">Imidazole glycerol phosphate synthase subunit HisF</fullName>
        <ecNumber evidence="1">4.3.2.10</ecNumber>
    </recommendedName>
    <alternativeName>
        <fullName evidence="1">IGP synthase cyclase subunit</fullName>
    </alternativeName>
    <alternativeName>
        <fullName evidence="1">IGP synthase subunit HisF</fullName>
    </alternativeName>
    <alternativeName>
        <fullName evidence="1">ImGP synthase subunit HisF</fullName>
        <shortName evidence="1">IGPS subunit HisF</shortName>
    </alternativeName>
</protein>
<accession>A9A5X0</accession>
<keyword id="KW-0028">Amino-acid biosynthesis</keyword>
<keyword id="KW-0963">Cytoplasm</keyword>
<keyword id="KW-0368">Histidine biosynthesis</keyword>
<keyword id="KW-0456">Lyase</keyword>
<keyword id="KW-1185">Reference proteome</keyword>
<sequence>MLTKRIIPCLDVDNGRVVKGLNFESIKDAGDPVELAAKYSKDGADELVFLDITASQEKRKTIKELVSNVAKVIDIPFTVGGGVNSMDDARNILLSGADKVGVNTGAVKNPELLTELMTIFGKQCVVVAIDAKRNYSEDSTKTMFEENGKKFWFEVFIYGGKQETGLDAIQWAKKATELGAGEVLLTSIDKDGTKDGYDILLTKKIVDTVSVPVIASGGCGKPEDMSEIFVKSDVDAALAASIFHYENQSVNQVKKILRDKNISVRL</sequence>